<accession>P9WI76</accession>
<accession>L0TA94</accession>
<accession>O08149</accession>
<accession>P72001</accession>
<reference key="1">
    <citation type="journal article" date="2002" name="J. Bacteriol.">
        <title>Whole-genome comparison of Mycobacterium tuberculosis clinical and laboratory strains.</title>
        <authorList>
            <person name="Fleischmann R.D."/>
            <person name="Alland D."/>
            <person name="Eisen J.A."/>
            <person name="Carpenter L."/>
            <person name="White O."/>
            <person name="Peterson J.D."/>
            <person name="DeBoy R.T."/>
            <person name="Dodson R.J."/>
            <person name="Gwinn M.L."/>
            <person name="Haft D.H."/>
            <person name="Hickey E.K."/>
            <person name="Kolonay J.F."/>
            <person name="Nelson W.C."/>
            <person name="Umayam L.A."/>
            <person name="Ermolaeva M.D."/>
            <person name="Salzberg S.L."/>
            <person name="Delcher A."/>
            <person name="Utterback T.R."/>
            <person name="Weidman J.F."/>
            <person name="Khouri H.M."/>
            <person name="Gill J."/>
            <person name="Mikula A."/>
            <person name="Bishai W."/>
            <person name="Jacobs W.R. Jr."/>
            <person name="Venter J.C."/>
            <person name="Fraser C.M."/>
        </authorList>
    </citation>
    <scope>NUCLEOTIDE SEQUENCE [LARGE SCALE GENOMIC DNA]</scope>
    <source>
        <strain>CDC 1551 / Oshkosh</strain>
    </source>
</reference>
<organism>
    <name type="scientific">Mycobacterium tuberculosis (strain CDC 1551 / Oshkosh)</name>
    <dbReference type="NCBI Taxonomy" id="83331"/>
    <lineage>
        <taxon>Bacteria</taxon>
        <taxon>Bacillati</taxon>
        <taxon>Actinomycetota</taxon>
        <taxon>Actinomycetes</taxon>
        <taxon>Mycobacteriales</taxon>
        <taxon>Mycobacteriaceae</taxon>
        <taxon>Mycobacterium</taxon>
        <taxon>Mycobacterium tuberculosis complex</taxon>
    </lineage>
</organism>
<feature type="chain" id="PRO_0000428055" description="Serine/threonine-protein kinase PknE">
    <location>
        <begin position="1"/>
        <end position="566"/>
    </location>
</feature>
<feature type="topological domain" description="Cytoplasmic" evidence="2">
    <location>
        <begin position="1"/>
        <end position="337"/>
    </location>
</feature>
<feature type="transmembrane region" description="Helical" evidence="2">
    <location>
        <begin position="338"/>
        <end position="358"/>
    </location>
</feature>
<feature type="topological domain" description="Extracellular" evidence="2">
    <location>
        <begin position="359"/>
        <end position="566"/>
    </location>
</feature>
<feature type="domain" description="Protein kinase" evidence="3">
    <location>
        <begin position="16"/>
        <end position="275"/>
    </location>
</feature>
<feature type="region of interest" description="Disordered" evidence="4">
    <location>
        <begin position="296"/>
        <end position="330"/>
    </location>
</feature>
<feature type="active site" description="Proton acceptor" evidence="3">
    <location>
        <position position="139"/>
    </location>
</feature>
<feature type="binding site" evidence="3">
    <location>
        <begin position="22"/>
        <end position="30"/>
    </location>
    <ligand>
        <name>ATP</name>
        <dbReference type="ChEBI" id="CHEBI:30616"/>
    </ligand>
</feature>
<feature type="binding site" evidence="3">
    <location>
        <position position="45"/>
    </location>
    <ligand>
        <name>ATP</name>
        <dbReference type="ChEBI" id="CHEBI:30616"/>
    </ligand>
</feature>
<feature type="modified residue" description="Phosphoserine; by autocatalysis" evidence="1">
    <location>
        <position position="7"/>
    </location>
</feature>
<feature type="modified residue" description="Phosphothreonine; by autocatalysis" evidence="1">
    <location>
        <position position="11"/>
    </location>
</feature>
<feature type="modified residue" description="Phosphothreonine; by autocatalysis" evidence="1">
    <location>
        <position position="50"/>
    </location>
</feature>
<feature type="modified residue" description="Phosphothreonine; by autocatalysis" evidence="1">
    <location>
        <position position="59"/>
    </location>
</feature>
<feature type="modified residue" description="Phosphothreonine; by autocatalysis" evidence="1">
    <location>
        <position position="170"/>
    </location>
</feature>
<feature type="modified residue" description="Phosphothreonine; by autocatalysis" evidence="1">
    <location>
        <position position="175"/>
    </location>
</feature>
<feature type="modified residue" description="Phosphothreonine; by autocatalysis" evidence="1">
    <location>
        <position position="178"/>
    </location>
</feature>
<comment type="function">
    <text evidence="1">Important for survival of the bacterium in the host during infection. Promotes the survival of infected macrophages by activating multiple signaling responses and suppressing apoptosis of macrophages during nitrate stress. May contribute to the adaptation of M.tuberculosis during stress conditions by maintaining the cellular integrity (By similarity).</text>
</comment>
<comment type="catalytic activity">
    <reaction>
        <text>L-seryl-[protein] + ATP = O-phospho-L-seryl-[protein] + ADP + H(+)</text>
        <dbReference type="Rhea" id="RHEA:17989"/>
        <dbReference type="Rhea" id="RHEA-COMP:9863"/>
        <dbReference type="Rhea" id="RHEA-COMP:11604"/>
        <dbReference type="ChEBI" id="CHEBI:15378"/>
        <dbReference type="ChEBI" id="CHEBI:29999"/>
        <dbReference type="ChEBI" id="CHEBI:30616"/>
        <dbReference type="ChEBI" id="CHEBI:83421"/>
        <dbReference type="ChEBI" id="CHEBI:456216"/>
        <dbReference type="EC" id="2.7.11.1"/>
    </reaction>
</comment>
<comment type="catalytic activity">
    <reaction>
        <text>L-threonyl-[protein] + ATP = O-phospho-L-threonyl-[protein] + ADP + H(+)</text>
        <dbReference type="Rhea" id="RHEA:46608"/>
        <dbReference type="Rhea" id="RHEA-COMP:11060"/>
        <dbReference type="Rhea" id="RHEA-COMP:11605"/>
        <dbReference type="ChEBI" id="CHEBI:15378"/>
        <dbReference type="ChEBI" id="CHEBI:30013"/>
        <dbReference type="ChEBI" id="CHEBI:30616"/>
        <dbReference type="ChEBI" id="CHEBI:61977"/>
        <dbReference type="ChEBI" id="CHEBI:456216"/>
        <dbReference type="EC" id="2.7.11.1"/>
    </reaction>
</comment>
<comment type="subunit">
    <text evidence="1">Homodimer.</text>
</comment>
<comment type="subcellular location">
    <subcellularLocation>
        <location evidence="1">Cell membrane</location>
        <topology evidence="1">Single-pass membrane protein</topology>
    </subcellularLocation>
</comment>
<comment type="PTM">
    <text evidence="1">Autophosphorylated on serine and threonine residues. Dephosphorylated by PstP (By similarity).</text>
</comment>
<comment type="similarity">
    <text evidence="3">Belongs to the protein kinase superfamily. Ser/Thr protein kinase family.</text>
</comment>
<proteinExistence type="inferred from homology"/>
<gene>
    <name type="primary">pknE</name>
    <name type="ordered locus">MT1785</name>
</gene>
<name>PKNE_MYCTO</name>
<sequence length="566" mass="60512">MDGTAESREGTQFGPYRLRRLVGRGGMGDVYEAEDTVRERIVALKLMSETLSSDPVFRTRMQREARTAGRLQEPHVVPIHDFGEIDGQLYVDMRLINGVDLAAMLRRQGPLAPPRAVAIVRQIGSALDAAHAAGATHRDVKPENILVSADDFAYLVDFGIASATTDEKLTQLGNTVGTLYYMAPERFSESHATYRADIYALTCVLYECLTGSPPYQGDQLSVMGAHINQAIPRPSTVRPGIPVAFDAVIARGMAKNPEDRYVTCGDLSAAAHAALATADQDRATDILRRSQVAKLPVPSTHPVSPGTRWPQPTPWAGGAPPWGPPSSPLPRSARQPWLWVGVAVAVVVALAGGLGIALAHPWRSSGPRTSAPPPPPPADAVELRVLNDGVFVGSSVAPTTIDIFNEPICPPCGSFIRSYASDIDTAVADKQLAVRYHLLNFLDDQSHSKNYSTRAVAASYCVAGQNDPKLYASFYSALFGSDFQPQENAASDRTDAELAHLAQTVGAEPTAISCIKSGADLGTAQTKATNASETLAGFNASGTPFVWDGSMVVNYQDPSWLARLIG</sequence>
<evidence type="ECO:0000250" key="1"/>
<evidence type="ECO:0000255" key="2"/>
<evidence type="ECO:0000255" key="3">
    <source>
        <dbReference type="PROSITE-ProRule" id="PRU00159"/>
    </source>
</evidence>
<evidence type="ECO:0000256" key="4">
    <source>
        <dbReference type="SAM" id="MobiDB-lite"/>
    </source>
</evidence>
<protein>
    <recommendedName>
        <fullName>Serine/threonine-protein kinase PknE</fullName>
        <ecNumber>2.7.11.1</ecNumber>
    </recommendedName>
</protein>
<keyword id="KW-0067">ATP-binding</keyword>
<keyword id="KW-1003">Cell membrane</keyword>
<keyword id="KW-0418">Kinase</keyword>
<keyword id="KW-0472">Membrane</keyword>
<keyword id="KW-0547">Nucleotide-binding</keyword>
<keyword id="KW-0597">Phosphoprotein</keyword>
<keyword id="KW-1185">Reference proteome</keyword>
<keyword id="KW-0723">Serine/threonine-protein kinase</keyword>
<keyword id="KW-0346">Stress response</keyword>
<keyword id="KW-0808">Transferase</keyword>
<keyword id="KW-0812">Transmembrane</keyword>
<keyword id="KW-1133">Transmembrane helix</keyword>
<keyword id="KW-0843">Virulence</keyword>
<dbReference type="EC" id="2.7.11.1"/>
<dbReference type="EMBL" id="AE000516">
    <property type="protein sequence ID" value="AAK46058.1"/>
    <property type="molecule type" value="Genomic_DNA"/>
</dbReference>
<dbReference type="PIR" id="H70985">
    <property type="entry name" value="H70985"/>
</dbReference>
<dbReference type="RefSeq" id="WP_003898998.1">
    <property type="nucleotide sequence ID" value="NZ_KK341227.1"/>
</dbReference>
<dbReference type="SMR" id="P9WI76"/>
<dbReference type="KEGG" id="mtc:MT1785"/>
<dbReference type="PATRIC" id="fig|83331.31.peg.1915"/>
<dbReference type="HOGENOM" id="CLU_000288_47_0_11"/>
<dbReference type="Proteomes" id="UP000001020">
    <property type="component" value="Chromosome"/>
</dbReference>
<dbReference type="GO" id="GO:0005886">
    <property type="term" value="C:plasma membrane"/>
    <property type="evidence" value="ECO:0007669"/>
    <property type="project" value="UniProtKB-SubCell"/>
</dbReference>
<dbReference type="GO" id="GO:0005524">
    <property type="term" value="F:ATP binding"/>
    <property type="evidence" value="ECO:0007669"/>
    <property type="project" value="UniProtKB-KW"/>
</dbReference>
<dbReference type="GO" id="GO:0106310">
    <property type="term" value="F:protein serine kinase activity"/>
    <property type="evidence" value="ECO:0007669"/>
    <property type="project" value="RHEA"/>
</dbReference>
<dbReference type="GO" id="GO:0004674">
    <property type="term" value="F:protein serine/threonine kinase activity"/>
    <property type="evidence" value="ECO:0007669"/>
    <property type="project" value="UniProtKB-KW"/>
</dbReference>
<dbReference type="CDD" id="cd14014">
    <property type="entry name" value="STKc_PknB_like"/>
    <property type="match status" value="1"/>
</dbReference>
<dbReference type="FunFam" id="1.10.510.10:FF:000021">
    <property type="entry name" value="Serine/threonine protein kinase"/>
    <property type="match status" value="1"/>
</dbReference>
<dbReference type="FunFam" id="3.30.200.20:FF:000348">
    <property type="entry name" value="Serine/threonine protein kinase"/>
    <property type="match status" value="1"/>
</dbReference>
<dbReference type="FunFam" id="3.40.30.10:FF:000373">
    <property type="entry name" value="Transmembrane serine/threonine-protein kinase E"/>
    <property type="match status" value="1"/>
</dbReference>
<dbReference type="Gene3D" id="3.40.30.10">
    <property type="entry name" value="Glutaredoxin"/>
    <property type="match status" value="1"/>
</dbReference>
<dbReference type="Gene3D" id="3.30.200.20">
    <property type="entry name" value="Phosphorylase Kinase, domain 1"/>
    <property type="match status" value="1"/>
</dbReference>
<dbReference type="Gene3D" id="1.10.510.10">
    <property type="entry name" value="Transferase(Phosphotransferase) domain 1"/>
    <property type="match status" value="1"/>
</dbReference>
<dbReference type="InterPro" id="IPR011009">
    <property type="entry name" value="Kinase-like_dom_sf"/>
</dbReference>
<dbReference type="InterPro" id="IPR000719">
    <property type="entry name" value="Prot_kinase_dom"/>
</dbReference>
<dbReference type="InterPro" id="IPR017441">
    <property type="entry name" value="Protein_kinase_ATP_BS"/>
</dbReference>
<dbReference type="InterPro" id="IPR012336">
    <property type="entry name" value="Thioredoxin-like_fold"/>
</dbReference>
<dbReference type="InterPro" id="IPR036249">
    <property type="entry name" value="Thioredoxin-like_sf"/>
</dbReference>
<dbReference type="PANTHER" id="PTHR43289">
    <property type="entry name" value="MITOGEN-ACTIVATED PROTEIN KINASE KINASE KINASE 20-RELATED"/>
    <property type="match status" value="1"/>
</dbReference>
<dbReference type="PANTHER" id="PTHR43289:SF6">
    <property type="entry name" value="SERINE_THREONINE-PROTEIN KINASE NEKL-3"/>
    <property type="match status" value="1"/>
</dbReference>
<dbReference type="Pfam" id="PF00069">
    <property type="entry name" value="Pkinase"/>
    <property type="match status" value="1"/>
</dbReference>
<dbReference type="Pfam" id="PF13462">
    <property type="entry name" value="Thioredoxin_4"/>
    <property type="match status" value="1"/>
</dbReference>
<dbReference type="SMART" id="SM00220">
    <property type="entry name" value="S_TKc"/>
    <property type="match status" value="1"/>
</dbReference>
<dbReference type="SUPFAM" id="SSF56112">
    <property type="entry name" value="Protein kinase-like (PK-like)"/>
    <property type="match status" value="1"/>
</dbReference>
<dbReference type="SUPFAM" id="SSF52833">
    <property type="entry name" value="Thioredoxin-like"/>
    <property type="match status" value="1"/>
</dbReference>
<dbReference type="PROSITE" id="PS00107">
    <property type="entry name" value="PROTEIN_KINASE_ATP"/>
    <property type="match status" value="1"/>
</dbReference>
<dbReference type="PROSITE" id="PS50011">
    <property type="entry name" value="PROTEIN_KINASE_DOM"/>
    <property type="match status" value="1"/>
</dbReference>